<sequence length="230" mass="25251">MTLLIRDVPQTERPRERFIREGAKALSNQEIVAILLRTGTKQSSALHVASTLLSQFPTLAMFSEAPLEEIQKVPGIGMAKAIELSAAIELGRRIQRETKLVRPVISSPEDAAELVSEDMRGLQQEHFVALYLNTKNHVIKQKTLFIGSLNASIVHPREVFKEALQSSSASVICLHNHPSGDPSPSPEDISVTKRLRQAGAILGIELLDHIIVGDGCFISLKERGFFATIS</sequence>
<organism>
    <name type="scientific">Shouchella clausii (strain KSM-K16)</name>
    <name type="common">Alkalihalobacillus clausii</name>
    <dbReference type="NCBI Taxonomy" id="66692"/>
    <lineage>
        <taxon>Bacteria</taxon>
        <taxon>Bacillati</taxon>
        <taxon>Bacillota</taxon>
        <taxon>Bacilli</taxon>
        <taxon>Bacillales</taxon>
        <taxon>Bacillaceae</taxon>
        <taxon>Shouchella</taxon>
    </lineage>
</organism>
<gene>
    <name type="ordered locus">ABC2615</name>
</gene>
<keyword id="KW-0378">Hydrolase</keyword>
<keyword id="KW-0479">Metal-binding</keyword>
<keyword id="KW-0482">Metalloprotease</keyword>
<keyword id="KW-0645">Protease</keyword>
<keyword id="KW-1185">Reference proteome</keyword>
<keyword id="KW-0862">Zinc</keyword>
<proteinExistence type="inferred from homology"/>
<name>Y2615_SHOC1</name>
<reference key="1">
    <citation type="submission" date="2003-10" db="EMBL/GenBank/DDBJ databases">
        <title>The complete genome sequence of the alkaliphilic Bacillus clausii KSM-K16.</title>
        <authorList>
            <person name="Takaki Y."/>
            <person name="Kageyama Y."/>
            <person name="Shimamura S."/>
            <person name="Suzuki H."/>
            <person name="Nishi S."/>
            <person name="Hatada Y."/>
            <person name="Kawai S."/>
            <person name="Ito S."/>
            <person name="Horikoshi K."/>
        </authorList>
    </citation>
    <scope>NUCLEOTIDE SEQUENCE [LARGE SCALE GENOMIC DNA]</scope>
    <source>
        <strain>KSM-K16</strain>
    </source>
</reference>
<comment type="similarity">
    <text evidence="2">Belongs to the UPF0758 family.</text>
</comment>
<feature type="chain" id="PRO_0000190682" description="UPF0758 protein ABC2615">
    <location>
        <begin position="1"/>
        <end position="230"/>
    </location>
</feature>
<feature type="domain" description="MPN" evidence="1">
    <location>
        <begin position="104"/>
        <end position="226"/>
    </location>
</feature>
<feature type="short sequence motif" description="JAMM motif" evidence="1">
    <location>
        <begin position="175"/>
        <end position="188"/>
    </location>
</feature>
<feature type="binding site" evidence="1">
    <location>
        <position position="175"/>
    </location>
    <ligand>
        <name>Zn(2+)</name>
        <dbReference type="ChEBI" id="CHEBI:29105"/>
        <note>catalytic</note>
    </ligand>
</feature>
<feature type="binding site" evidence="1">
    <location>
        <position position="177"/>
    </location>
    <ligand>
        <name>Zn(2+)</name>
        <dbReference type="ChEBI" id="CHEBI:29105"/>
        <note>catalytic</note>
    </ligand>
</feature>
<feature type="binding site" evidence="1">
    <location>
        <position position="188"/>
    </location>
    <ligand>
        <name>Zn(2+)</name>
        <dbReference type="ChEBI" id="CHEBI:29105"/>
        <note>catalytic</note>
    </ligand>
</feature>
<dbReference type="EMBL" id="AP006627">
    <property type="protein sequence ID" value="BAD65150.1"/>
    <property type="molecule type" value="Genomic_DNA"/>
</dbReference>
<dbReference type="SMR" id="Q5WER0"/>
<dbReference type="STRING" id="66692.ABC2615"/>
<dbReference type="KEGG" id="bcl:ABC2615"/>
<dbReference type="eggNOG" id="COG2003">
    <property type="taxonomic scope" value="Bacteria"/>
</dbReference>
<dbReference type="HOGENOM" id="CLU_073529_0_2_9"/>
<dbReference type="OrthoDB" id="9804482at2"/>
<dbReference type="Proteomes" id="UP000001168">
    <property type="component" value="Chromosome"/>
</dbReference>
<dbReference type="GO" id="GO:0046872">
    <property type="term" value="F:metal ion binding"/>
    <property type="evidence" value="ECO:0007669"/>
    <property type="project" value="UniProtKB-KW"/>
</dbReference>
<dbReference type="GO" id="GO:0008237">
    <property type="term" value="F:metallopeptidase activity"/>
    <property type="evidence" value="ECO:0007669"/>
    <property type="project" value="UniProtKB-KW"/>
</dbReference>
<dbReference type="GO" id="GO:0006508">
    <property type="term" value="P:proteolysis"/>
    <property type="evidence" value="ECO:0007669"/>
    <property type="project" value="UniProtKB-KW"/>
</dbReference>
<dbReference type="CDD" id="cd08071">
    <property type="entry name" value="MPN_DUF2466"/>
    <property type="match status" value="1"/>
</dbReference>
<dbReference type="Gene3D" id="3.40.140.10">
    <property type="entry name" value="Cytidine Deaminase, domain 2"/>
    <property type="match status" value="1"/>
</dbReference>
<dbReference type="InterPro" id="IPR037518">
    <property type="entry name" value="MPN"/>
</dbReference>
<dbReference type="InterPro" id="IPR025657">
    <property type="entry name" value="RadC_JAB"/>
</dbReference>
<dbReference type="InterPro" id="IPR010994">
    <property type="entry name" value="RuvA_2-like"/>
</dbReference>
<dbReference type="InterPro" id="IPR001405">
    <property type="entry name" value="UPF0758"/>
</dbReference>
<dbReference type="InterPro" id="IPR020891">
    <property type="entry name" value="UPF0758_CS"/>
</dbReference>
<dbReference type="InterPro" id="IPR046778">
    <property type="entry name" value="UPF0758_N"/>
</dbReference>
<dbReference type="NCBIfam" id="NF000642">
    <property type="entry name" value="PRK00024.1"/>
    <property type="match status" value="1"/>
</dbReference>
<dbReference type="NCBIfam" id="TIGR00608">
    <property type="entry name" value="radc"/>
    <property type="match status" value="1"/>
</dbReference>
<dbReference type="PANTHER" id="PTHR30471">
    <property type="entry name" value="DNA REPAIR PROTEIN RADC"/>
    <property type="match status" value="1"/>
</dbReference>
<dbReference type="PANTHER" id="PTHR30471:SF3">
    <property type="entry name" value="UPF0758 PROTEIN YEES-RELATED"/>
    <property type="match status" value="1"/>
</dbReference>
<dbReference type="Pfam" id="PF04002">
    <property type="entry name" value="RadC"/>
    <property type="match status" value="1"/>
</dbReference>
<dbReference type="Pfam" id="PF20582">
    <property type="entry name" value="UPF0758_N"/>
    <property type="match status" value="1"/>
</dbReference>
<dbReference type="SUPFAM" id="SSF47781">
    <property type="entry name" value="RuvA domain 2-like"/>
    <property type="match status" value="1"/>
</dbReference>
<dbReference type="PROSITE" id="PS50249">
    <property type="entry name" value="MPN"/>
    <property type="match status" value="1"/>
</dbReference>
<dbReference type="PROSITE" id="PS01302">
    <property type="entry name" value="UPF0758"/>
    <property type="match status" value="1"/>
</dbReference>
<accession>Q5WER0</accession>
<protein>
    <recommendedName>
        <fullName>UPF0758 protein ABC2615</fullName>
    </recommendedName>
</protein>
<evidence type="ECO:0000255" key="1">
    <source>
        <dbReference type="PROSITE-ProRule" id="PRU01182"/>
    </source>
</evidence>
<evidence type="ECO:0000305" key="2"/>